<accession>O78502</accession>
<sequence>MSETLNLQIPSPTFEGSTGGWLRAAETEEKYAITWTSPKEQVFEMPTGGAAIMRKGENLLYLARKEQCLALGTQVKTSFKITDYKIYRIFPSGEVQYLHPKDGVFPEKVNPGRIGVGNVSHSIGKNLNPAQIKFTNKSFCD</sequence>
<protein>
    <recommendedName>
        <fullName>Photosystem I reaction center subunit II</fullName>
    </recommendedName>
    <alternativeName>
        <fullName>Photosystem I 16 kDa polypeptide</fullName>
        <shortName>PSI-D</shortName>
    </alternativeName>
</protein>
<reference key="1">
    <citation type="journal article" date="1999" name="J. Mol. Evol.">
        <title>The plastid genome of the cryptophyte alga, Guillardia theta: complete sequence and conserved synteny groups confirm its common ancestry with red algae.</title>
        <authorList>
            <person name="Douglas S.E."/>
            <person name="Penny S.L."/>
        </authorList>
    </citation>
    <scope>NUCLEOTIDE SEQUENCE [LARGE SCALE GENOMIC DNA]</scope>
</reference>
<organism>
    <name type="scientific">Guillardia theta</name>
    <name type="common">Cryptophyte</name>
    <name type="synonym">Cryptomonas phi</name>
    <dbReference type="NCBI Taxonomy" id="55529"/>
    <lineage>
        <taxon>Eukaryota</taxon>
        <taxon>Cryptophyceae</taxon>
        <taxon>Pyrenomonadales</taxon>
        <taxon>Geminigeraceae</taxon>
        <taxon>Guillardia</taxon>
    </lineage>
</organism>
<keyword id="KW-0150">Chloroplast</keyword>
<keyword id="KW-0472">Membrane</keyword>
<keyword id="KW-0602">Photosynthesis</keyword>
<keyword id="KW-0603">Photosystem I</keyword>
<keyword id="KW-0934">Plastid</keyword>
<keyword id="KW-0793">Thylakoid</keyword>
<dbReference type="EMBL" id="AF041468">
    <property type="protein sequence ID" value="AAC35693.1"/>
    <property type="molecule type" value="Genomic_DNA"/>
</dbReference>
<dbReference type="RefSeq" id="NP_050759.1">
    <property type="nucleotide sequence ID" value="NC_000926.1"/>
</dbReference>
<dbReference type="SMR" id="O78502"/>
<dbReference type="GeneID" id="857065"/>
<dbReference type="HOGENOM" id="CLU_150527_0_0_1"/>
<dbReference type="OMA" id="HNPRRIG"/>
<dbReference type="GO" id="GO:0009535">
    <property type="term" value="C:chloroplast thylakoid membrane"/>
    <property type="evidence" value="ECO:0007669"/>
    <property type="project" value="UniProtKB-SubCell"/>
</dbReference>
<dbReference type="GO" id="GO:0009538">
    <property type="term" value="C:photosystem I reaction center"/>
    <property type="evidence" value="ECO:0007669"/>
    <property type="project" value="InterPro"/>
</dbReference>
<dbReference type="GO" id="GO:0015979">
    <property type="term" value="P:photosynthesis"/>
    <property type="evidence" value="ECO:0007669"/>
    <property type="project" value="UniProtKB-KW"/>
</dbReference>
<dbReference type="Gene3D" id="3.30.1470.10">
    <property type="entry name" value="Photosystem I PsaD, reaction center subunit II"/>
    <property type="match status" value="1"/>
</dbReference>
<dbReference type="InterPro" id="IPR003685">
    <property type="entry name" value="PsaD"/>
</dbReference>
<dbReference type="InterPro" id="IPR036579">
    <property type="entry name" value="PsaD_sf"/>
</dbReference>
<dbReference type="PANTHER" id="PTHR31982:SF5">
    <property type="entry name" value="PHOTOSYSTEM I REACTION CENTER SUBUNIT II, CHLOROPLASTIC"/>
    <property type="match status" value="1"/>
</dbReference>
<dbReference type="PANTHER" id="PTHR31982">
    <property type="entry name" value="PHOTOSYSTEM I REACTION CENTER SUBUNIT II-1, CHLOROPLASTIC-RELATED"/>
    <property type="match status" value="1"/>
</dbReference>
<dbReference type="Pfam" id="PF02531">
    <property type="entry name" value="PsaD"/>
    <property type="match status" value="1"/>
</dbReference>
<dbReference type="SUPFAM" id="SSF64234">
    <property type="entry name" value="Photosystem I subunit PsaD"/>
    <property type="match status" value="1"/>
</dbReference>
<geneLocation type="chloroplast"/>
<feature type="chain" id="PRO_0000206044" description="Photosystem I reaction center subunit II">
    <location>
        <begin position="1"/>
        <end position="141"/>
    </location>
</feature>
<proteinExistence type="inferred from homology"/>
<evidence type="ECO:0000250" key="1"/>
<evidence type="ECO:0000305" key="2"/>
<name>PSAD_GUITH</name>
<gene>
    <name type="primary">psaD</name>
</gene>
<comment type="function">
    <text>PsaD can form complexes with ferredoxin and ferredoxin-oxidoreductase in photosystem I (PS I) reaction center.</text>
</comment>
<comment type="subcellular location">
    <subcellularLocation>
        <location evidence="1">Plastid</location>
        <location evidence="1">Chloroplast thylakoid membrane</location>
        <topology evidence="1">Peripheral membrane protein</topology>
        <orientation evidence="1">Stromal side</orientation>
    </subcellularLocation>
</comment>
<comment type="similarity">
    <text evidence="2">Belongs to the PsaD family.</text>
</comment>